<keyword id="KW-0223">Dioxygenase</keyword>
<keyword id="KW-0408">Iron</keyword>
<keyword id="KW-0479">Metal-binding</keyword>
<keyword id="KW-0560">Oxidoreductase</keyword>
<keyword id="KW-1185">Reference proteome</keyword>
<sequence length="557" mass="62875">MAILNDPPSSTTILSLHTPDVPPPSKPTPATTSHPQDSRNPRNLTSKWPTAIDLAGSSLPCRLEGEVANLVVLGSIPPEINGTFYRVMCDPFVPPHPQNVPIDGDGNISAFRFHNGIVDMKMQYIETERYKLERQANKALFGLYRNPYTHHPCVRAAVDSTANTNLVMWADKLLALKEVGLPYEVDGDTLETLGYDPFASEGVESKTFTAHPKVDPFTDELVVFGYEAKGLATLDVVTYTLDAQGKKVEELWVKSPWCAFIHDCAITENWLILVCWCFEANIERMKKGGQHWAWDYEKPATFIVVPRRKSTPLPDGWKEGESRYYEWNNCMPVHTAGAWEGKDGKLYMESSRVHDNAFPFFPPDDGRMPNPDTKGDFARWEFDLSQPSGSKIQDPLVVLDIPCEFPRIDERFMTKEYEWVFLDVFIPEQGDGKSNIYQGLNGLAMHNNKTNETKYFYAGQDSHVQEPIFIPRSKDSKEGDGWVMAMVERRIANRCDLVVIDTRDFEKAIAIVELPFHIKAQIHGNWVGATETRGTKSLVREMEKIEISGKGALEPMA</sequence>
<accession>A0A384JIP2</accession>
<comment type="function">
    <text evidence="1 4">Dioxygenase that cleaves the interphenyl C-alpha-C-beta double bond of resveratrol to yield 3,5-dihydroxybenzaldehyde and 4-hydroxybenzaldehyde (PubMed:21073977). Also cleaves piceatannol, a compound that differs from resveratrol only in the occurrence of an additional hydroxyl group, which leads to the production of 3,4-dihydroxybenzaldehyde and 3,5-hydroxybenzaldehyde (By similarity).</text>
</comment>
<comment type="catalytic activity">
    <reaction evidence="4">
        <text>trans-resveratrol + O2 = 3,5-dihydroxybenzaldehyde + 4-hydroxybenzaldehyde</text>
        <dbReference type="Rhea" id="RHEA:73735"/>
        <dbReference type="ChEBI" id="CHEBI:15379"/>
        <dbReference type="ChEBI" id="CHEBI:17597"/>
        <dbReference type="ChEBI" id="CHEBI:45713"/>
        <dbReference type="ChEBI" id="CHEBI:50204"/>
    </reaction>
    <physiologicalReaction direction="left-to-right" evidence="4">
        <dbReference type="Rhea" id="RHEA:73736"/>
    </physiologicalReaction>
</comment>
<comment type="catalytic activity">
    <reaction evidence="1">
        <text>piceatannol + O2 = 3,5-dihydroxybenzaldehyde + 3,4-dihydroxybenzaldehyde</text>
        <dbReference type="Rhea" id="RHEA:73815"/>
        <dbReference type="ChEBI" id="CHEBI:15379"/>
        <dbReference type="ChEBI" id="CHEBI:28814"/>
        <dbReference type="ChEBI" id="CHEBI:50204"/>
        <dbReference type="ChEBI" id="CHEBI:50205"/>
    </reaction>
    <physiologicalReaction direction="left-to-right" evidence="1">
        <dbReference type="Rhea" id="RHEA:73816"/>
    </physiologicalReaction>
</comment>
<comment type="cofactor">
    <cofactor evidence="2">
        <name>Fe(2+)</name>
        <dbReference type="ChEBI" id="CHEBI:29033"/>
    </cofactor>
    <text evidence="2">Binds 1 Fe(2+) ion per subunit.</text>
</comment>
<comment type="similarity">
    <text evidence="6">Belongs to the carotenoid oxygenase family.</text>
</comment>
<reference key="1">
    <citation type="journal article" date="2011" name="PLoS Genet.">
        <title>Genomic analysis of the necrotrophic fungal pathogens Sclerotinia sclerotiorum and Botrytis cinerea.</title>
        <authorList>
            <person name="Amselem J."/>
            <person name="Cuomo C.A."/>
            <person name="van Kan J.A.L."/>
            <person name="Viaud M."/>
            <person name="Benito E.P."/>
            <person name="Couloux A."/>
            <person name="Coutinho P.M."/>
            <person name="de Vries R.P."/>
            <person name="Dyer P.S."/>
            <person name="Fillinger S."/>
            <person name="Fournier E."/>
            <person name="Gout L."/>
            <person name="Hahn M."/>
            <person name="Kohn L."/>
            <person name="Lapalu N."/>
            <person name="Plummer K.M."/>
            <person name="Pradier J.-M."/>
            <person name="Quevillon E."/>
            <person name="Sharon A."/>
            <person name="Simon A."/>
            <person name="ten Have A."/>
            <person name="Tudzynski B."/>
            <person name="Tudzynski P."/>
            <person name="Wincker P."/>
            <person name="Andrew M."/>
            <person name="Anthouard V."/>
            <person name="Beever R.E."/>
            <person name="Beffa R."/>
            <person name="Benoit I."/>
            <person name="Bouzid O."/>
            <person name="Brault B."/>
            <person name="Chen Z."/>
            <person name="Choquer M."/>
            <person name="Collemare J."/>
            <person name="Cotton P."/>
            <person name="Danchin E.G."/>
            <person name="Da Silva C."/>
            <person name="Gautier A."/>
            <person name="Giraud C."/>
            <person name="Giraud T."/>
            <person name="Gonzalez C."/>
            <person name="Grossetete S."/>
            <person name="Gueldener U."/>
            <person name="Henrissat B."/>
            <person name="Howlett B.J."/>
            <person name="Kodira C."/>
            <person name="Kretschmer M."/>
            <person name="Lappartient A."/>
            <person name="Leroch M."/>
            <person name="Levis C."/>
            <person name="Mauceli E."/>
            <person name="Neuveglise C."/>
            <person name="Oeser B."/>
            <person name="Pearson M."/>
            <person name="Poulain J."/>
            <person name="Poussereau N."/>
            <person name="Quesneville H."/>
            <person name="Rascle C."/>
            <person name="Schumacher J."/>
            <person name="Segurens B."/>
            <person name="Sexton A."/>
            <person name="Silva E."/>
            <person name="Sirven C."/>
            <person name="Soanes D.M."/>
            <person name="Talbot N.J."/>
            <person name="Templeton M."/>
            <person name="Yandava C."/>
            <person name="Yarden O."/>
            <person name="Zeng Q."/>
            <person name="Rollins J.A."/>
            <person name="Lebrun M.-H."/>
            <person name="Dickman M."/>
        </authorList>
    </citation>
    <scope>NUCLEOTIDE SEQUENCE [LARGE SCALE GENOMIC DNA]</scope>
    <source>
        <strain>B05.10</strain>
    </source>
</reference>
<reference key="2">
    <citation type="journal article" date="2012" name="Eukaryot. Cell">
        <title>Genome update of Botrytis cinerea strains B05.10 and T4.</title>
        <authorList>
            <person name="Staats M."/>
            <person name="van Kan J.A.L."/>
        </authorList>
    </citation>
    <scope>NUCLEOTIDE SEQUENCE [LARGE SCALE GENOMIC DNA]</scope>
    <source>
        <strain>B05.10</strain>
    </source>
</reference>
<reference key="3">
    <citation type="journal article" date="2017" name="Mol. Plant Pathol.">
        <title>A gapless genome sequence of the fungus Botrytis cinerea.</title>
        <authorList>
            <person name="van Kan J.A.L."/>
            <person name="Stassen J.H.M."/>
            <person name="Mosbach A."/>
            <person name="van der Lee T.A.J."/>
            <person name="Faino L."/>
            <person name="Farmer A.D."/>
            <person name="Papasotiriou D.G."/>
            <person name="Zhou S."/>
            <person name="Seidl M.F."/>
            <person name="Cottam E."/>
            <person name="Edel D."/>
            <person name="Hahn M."/>
            <person name="Schwartz D.C."/>
            <person name="Dietrich R.A."/>
            <person name="Widdison S."/>
            <person name="Scalliet G."/>
        </authorList>
    </citation>
    <scope>NUCLEOTIDE SEQUENCE [LARGE SCALE GENOMIC DNA]</scope>
    <source>
        <strain>B05.10</strain>
    </source>
</reference>
<reference key="4">
    <citation type="journal article" date="2011" name="Fungal Genet. Biol.">
        <title>Cleavage of resveratrol in fungi: characterization of the enzyme Rco1 from Ustilago maydis.</title>
        <authorList>
            <person name="Brefort T."/>
            <person name="Scherzinger D."/>
            <person name="Limon M.C."/>
            <person name="Estrada A.F."/>
            <person name="Trautmann D."/>
            <person name="Mengel C."/>
            <person name="Avalos J."/>
            <person name="Al-Babili S."/>
        </authorList>
    </citation>
    <scope>FUNCTION</scope>
    <scope>CATALYTIC ACTIVITY</scope>
</reference>
<evidence type="ECO:0000250" key="1">
    <source>
        <dbReference type="UniProtKB" id="A0A0D1E6L2"/>
    </source>
</evidence>
<evidence type="ECO:0000250" key="2">
    <source>
        <dbReference type="UniProtKB" id="Q7S860"/>
    </source>
</evidence>
<evidence type="ECO:0000256" key="3">
    <source>
        <dbReference type="SAM" id="MobiDB-lite"/>
    </source>
</evidence>
<evidence type="ECO:0000269" key="4">
    <source>
    </source>
</evidence>
<evidence type="ECO:0000303" key="5">
    <source>
    </source>
</evidence>
<evidence type="ECO:0000305" key="6"/>
<feature type="chain" id="PRO_0000456954" description="Resveratrol cleavage oxygenase 1">
    <location>
        <begin position="1"/>
        <end position="557"/>
    </location>
</feature>
<feature type="region of interest" description="Disordered" evidence="3">
    <location>
        <begin position="1"/>
        <end position="46"/>
    </location>
</feature>
<feature type="binding site" evidence="2">
    <location>
        <position position="144"/>
    </location>
    <ligand>
        <name>piceatannol</name>
        <dbReference type="ChEBI" id="CHEBI:28814"/>
    </ligand>
</feature>
<feature type="binding site" evidence="2">
    <location>
        <position position="144"/>
    </location>
    <ligand>
        <name>trans-resveratrol</name>
        <dbReference type="ChEBI" id="CHEBI:45713"/>
    </ligand>
</feature>
<feature type="binding site" evidence="2">
    <location>
        <position position="177"/>
    </location>
    <ligand>
        <name>piceatannol</name>
        <dbReference type="ChEBI" id="CHEBI:28814"/>
    </ligand>
</feature>
<feature type="binding site" evidence="2">
    <location>
        <position position="177"/>
    </location>
    <ligand>
        <name>trans-resveratrol</name>
        <dbReference type="ChEBI" id="CHEBI:45713"/>
    </ligand>
</feature>
<feature type="binding site" evidence="2">
    <location>
        <position position="211"/>
    </location>
    <ligand>
        <name>Fe cation</name>
        <dbReference type="ChEBI" id="CHEBI:24875"/>
        <note>catalytic</note>
    </ligand>
</feature>
<feature type="binding site" evidence="2">
    <location>
        <position position="262"/>
    </location>
    <ligand>
        <name>Fe cation</name>
        <dbReference type="ChEBI" id="CHEBI:24875"/>
        <note>catalytic</note>
    </ligand>
</feature>
<feature type="binding site" evidence="2">
    <location>
        <position position="334"/>
    </location>
    <ligand>
        <name>Fe cation</name>
        <dbReference type="ChEBI" id="CHEBI:24875"/>
        <note>catalytic</note>
    </ligand>
</feature>
<feature type="binding site" evidence="2">
    <location>
        <position position="404"/>
    </location>
    <ligand>
        <name>piceatannol</name>
        <dbReference type="ChEBI" id="CHEBI:28814"/>
    </ligand>
</feature>
<feature type="binding site" evidence="2">
    <location>
        <position position="404"/>
    </location>
    <ligand>
        <name>trans-resveratrol</name>
        <dbReference type="ChEBI" id="CHEBI:45713"/>
    </ligand>
</feature>
<feature type="binding site" evidence="2">
    <location>
        <position position="523"/>
    </location>
    <ligand>
        <name>Fe cation</name>
        <dbReference type="ChEBI" id="CHEBI:24875"/>
        <note>catalytic</note>
    </ligand>
</feature>
<protein>
    <recommendedName>
        <fullName evidence="5">Resveratrol cleavage oxygenase 1</fullName>
        <shortName evidence="5">RCO 1</shortName>
        <ecNumber evidence="4">1.13.11.-</ecNumber>
    </recommendedName>
</protein>
<gene>
    <name evidence="5" type="primary">rco1</name>
    <name type="ORF">BCIN_05g08170</name>
</gene>
<organism>
    <name type="scientific">Botryotinia fuckeliana (strain B05.10)</name>
    <name type="common">Noble rot fungus</name>
    <name type="synonym">Botrytis cinerea</name>
    <dbReference type="NCBI Taxonomy" id="332648"/>
    <lineage>
        <taxon>Eukaryota</taxon>
        <taxon>Fungi</taxon>
        <taxon>Dikarya</taxon>
        <taxon>Ascomycota</taxon>
        <taxon>Pezizomycotina</taxon>
        <taxon>Leotiomycetes</taxon>
        <taxon>Helotiales</taxon>
        <taxon>Sclerotiniaceae</taxon>
        <taxon>Botrytis</taxon>
    </lineage>
</organism>
<dbReference type="EC" id="1.13.11.-" evidence="4"/>
<dbReference type="EMBL" id="CP009809">
    <property type="protein sequence ID" value="ATZ50468.1"/>
    <property type="molecule type" value="Genomic_DNA"/>
</dbReference>
<dbReference type="SMR" id="A0A384JIP2"/>
<dbReference type="EnsemblFungi" id="Bcin05g08170.1">
    <property type="protein sequence ID" value="Bcin05p08170.1"/>
    <property type="gene ID" value="Bcin05g08170"/>
</dbReference>
<dbReference type="KEGG" id="bfu:BCIN_05g08170"/>
<dbReference type="VEuPathDB" id="FungiDB:Bcin05g08170"/>
<dbReference type="OMA" id="NPYTHHP"/>
<dbReference type="OrthoDB" id="1069523at2759"/>
<dbReference type="Proteomes" id="UP000001798">
    <property type="component" value="Chromosome bcin05"/>
</dbReference>
<dbReference type="GO" id="GO:0010436">
    <property type="term" value="F:carotenoid dioxygenase activity"/>
    <property type="evidence" value="ECO:0007669"/>
    <property type="project" value="TreeGrafter"/>
</dbReference>
<dbReference type="GO" id="GO:0046872">
    <property type="term" value="F:metal ion binding"/>
    <property type="evidence" value="ECO:0007669"/>
    <property type="project" value="UniProtKB-KW"/>
</dbReference>
<dbReference type="GO" id="GO:0016121">
    <property type="term" value="P:carotene catabolic process"/>
    <property type="evidence" value="ECO:0007669"/>
    <property type="project" value="TreeGrafter"/>
</dbReference>
<dbReference type="InterPro" id="IPR004294">
    <property type="entry name" value="Carotenoid_Oase"/>
</dbReference>
<dbReference type="PANTHER" id="PTHR10543">
    <property type="entry name" value="BETA-CAROTENE DIOXYGENASE"/>
    <property type="match status" value="1"/>
</dbReference>
<dbReference type="PANTHER" id="PTHR10543:SF89">
    <property type="entry name" value="CAROTENOID 9,10(9',10')-CLEAVAGE DIOXYGENASE 1"/>
    <property type="match status" value="1"/>
</dbReference>
<dbReference type="Pfam" id="PF03055">
    <property type="entry name" value="RPE65"/>
    <property type="match status" value="1"/>
</dbReference>
<name>RCO1_BOTFB</name>
<proteinExistence type="evidence at protein level"/>